<organism>
    <name type="scientific">Pasteurella multocida (strain Pm70)</name>
    <dbReference type="NCBI Taxonomy" id="272843"/>
    <lineage>
        <taxon>Bacteria</taxon>
        <taxon>Pseudomonadati</taxon>
        <taxon>Pseudomonadota</taxon>
        <taxon>Gammaproteobacteria</taxon>
        <taxon>Pasteurellales</taxon>
        <taxon>Pasteurellaceae</taxon>
        <taxon>Pasteurella</taxon>
    </lineage>
</organism>
<dbReference type="EC" id="2.7.-.-" evidence="1"/>
<dbReference type="EMBL" id="AE004439">
    <property type="protein sequence ID" value="AAK03772.1"/>
    <property type="molecule type" value="Genomic_DNA"/>
</dbReference>
<dbReference type="RefSeq" id="WP_010907289.1">
    <property type="nucleotide sequence ID" value="NC_002663.1"/>
</dbReference>
<dbReference type="SMR" id="Q9CKD4"/>
<dbReference type="STRING" id="272843.PM1688"/>
<dbReference type="EnsemblBacteria" id="AAK03772">
    <property type="protein sequence ID" value="AAK03772"/>
    <property type="gene ID" value="PM1688"/>
</dbReference>
<dbReference type="KEGG" id="pmu:PM1688"/>
<dbReference type="PATRIC" id="fig|272843.6.peg.1709"/>
<dbReference type="HOGENOM" id="CLU_006533_0_0_6"/>
<dbReference type="OrthoDB" id="9795390at2"/>
<dbReference type="UniPathway" id="UPA00232"/>
<dbReference type="Proteomes" id="UP000000809">
    <property type="component" value="Chromosome"/>
</dbReference>
<dbReference type="GO" id="GO:0005886">
    <property type="term" value="C:plasma membrane"/>
    <property type="evidence" value="ECO:0007669"/>
    <property type="project" value="UniProtKB-SubCell"/>
</dbReference>
<dbReference type="GO" id="GO:0005524">
    <property type="term" value="F:ATP binding"/>
    <property type="evidence" value="ECO:0007669"/>
    <property type="project" value="UniProtKB-KW"/>
</dbReference>
<dbReference type="GO" id="GO:0004672">
    <property type="term" value="F:protein kinase activity"/>
    <property type="evidence" value="ECO:0007669"/>
    <property type="project" value="UniProtKB-UniRule"/>
</dbReference>
<dbReference type="GO" id="GO:0010795">
    <property type="term" value="P:regulation of ubiquinone biosynthetic process"/>
    <property type="evidence" value="ECO:0007669"/>
    <property type="project" value="UniProtKB-UniRule"/>
</dbReference>
<dbReference type="GO" id="GO:0006744">
    <property type="term" value="P:ubiquinone biosynthetic process"/>
    <property type="evidence" value="ECO:0007669"/>
    <property type="project" value="UniProtKB-UniPathway"/>
</dbReference>
<dbReference type="CDD" id="cd13972">
    <property type="entry name" value="UbiB"/>
    <property type="match status" value="1"/>
</dbReference>
<dbReference type="HAMAP" id="MF_00414">
    <property type="entry name" value="UbiB"/>
    <property type="match status" value="1"/>
</dbReference>
<dbReference type="InterPro" id="IPR004147">
    <property type="entry name" value="ABC1_dom"/>
</dbReference>
<dbReference type="InterPro" id="IPR011009">
    <property type="entry name" value="Kinase-like_dom_sf"/>
</dbReference>
<dbReference type="InterPro" id="IPR010232">
    <property type="entry name" value="UbiB"/>
</dbReference>
<dbReference type="InterPro" id="IPR045308">
    <property type="entry name" value="UbiB_bact"/>
</dbReference>
<dbReference type="InterPro" id="IPR050154">
    <property type="entry name" value="UbiB_kinase"/>
</dbReference>
<dbReference type="NCBIfam" id="NF003404">
    <property type="entry name" value="PRK04750.1"/>
    <property type="match status" value="1"/>
</dbReference>
<dbReference type="NCBIfam" id="TIGR01982">
    <property type="entry name" value="UbiB"/>
    <property type="match status" value="1"/>
</dbReference>
<dbReference type="PANTHER" id="PTHR10566">
    <property type="entry name" value="CHAPERONE-ACTIVITY OF BC1 COMPLEX CABC1 -RELATED"/>
    <property type="match status" value="1"/>
</dbReference>
<dbReference type="PANTHER" id="PTHR10566:SF113">
    <property type="entry name" value="PROTEIN ACTIVITY OF BC1 COMPLEX KINASE 7, CHLOROPLASTIC"/>
    <property type="match status" value="1"/>
</dbReference>
<dbReference type="Pfam" id="PF03109">
    <property type="entry name" value="ABC1"/>
    <property type="match status" value="1"/>
</dbReference>
<dbReference type="SUPFAM" id="SSF56112">
    <property type="entry name" value="Protein kinase-like (PK-like)"/>
    <property type="match status" value="1"/>
</dbReference>
<sequence length="527" mass="61408">MQIKDISHLYNIIKTFLLYGIDEALPQHRYTRAIRCWRKTLFWLRNQHKDKTFGLRLRLALQELGPVWIKLGQMLSTRRDLFPPDIADELALLQDQVDPFDGKIARAQIEKALGAPLETWFDEFNETALASASIAQVHTAKFKQNAPHLENRLAGKEVVLKVLRPNIQQMINADLSLMYKVASWIPRIKAEGRRLRPVEVVREYEKNLRDELDLRREMANAIQLRANFENSPMLYIPEMYKQFCHQTVIVMERIYGIPVSNIEELHANGTNMKLLAERGVQVFFTQVFRDSFFHADMHPGNIFVNRAHPDDPQYIGIDCGIVGRLNDHDKRYLAESFVAFFNRDYRRVAEMHVASGWTPKDTNIDDFEQAFREVCEPIFAKPLSEISFGHVLLNLFNVAREYNMEVQPQLVLLQKTLLYIEGLGRQLYPQLDLWDTAKPFLQKWLDEQMGIKAFTKSVKQKLPYWREHLVDLPENVMDALAQQKIIADELIHLNRTLAKKRNIPHFTSFILGLCTGLAIWLLIYLLS</sequence>
<gene>
    <name evidence="1" type="primary">ubiB</name>
    <name type="ordered locus">PM1688</name>
</gene>
<evidence type="ECO:0000255" key="1">
    <source>
        <dbReference type="HAMAP-Rule" id="MF_00414"/>
    </source>
</evidence>
<accession>Q9CKD4</accession>
<comment type="function">
    <text evidence="1">Is probably a protein kinase regulator of UbiI activity which is involved in aerobic coenzyme Q (ubiquinone) biosynthesis.</text>
</comment>
<comment type="pathway">
    <text>Cofactor biosynthesis; ubiquinone biosynthesis [regulation].</text>
</comment>
<comment type="subcellular location">
    <subcellularLocation>
        <location evidence="1">Cell inner membrane</location>
        <topology evidence="1">Single-pass membrane protein</topology>
    </subcellularLocation>
</comment>
<comment type="similarity">
    <text evidence="1">Belongs to the ABC1 family. UbiB subfamily.</text>
</comment>
<feature type="chain" id="PRO_0000200710" description="Probable protein kinase UbiB">
    <location>
        <begin position="1"/>
        <end position="527"/>
    </location>
</feature>
<feature type="transmembrane region" description="Helical" evidence="1">
    <location>
        <begin position="506"/>
        <end position="526"/>
    </location>
</feature>
<feature type="domain" description="Protein kinase" evidence="1">
    <location>
        <begin position="123"/>
        <end position="527"/>
    </location>
</feature>
<feature type="active site" description="Proton acceptor" evidence="1">
    <location>
        <position position="296"/>
    </location>
</feature>
<feature type="binding site" evidence="1">
    <location>
        <begin position="129"/>
        <end position="137"/>
    </location>
    <ligand>
        <name>ATP</name>
        <dbReference type="ChEBI" id="CHEBI:30616"/>
    </ligand>
</feature>
<feature type="binding site" evidence="1">
    <location>
        <position position="161"/>
    </location>
    <ligand>
        <name>ATP</name>
        <dbReference type="ChEBI" id="CHEBI:30616"/>
    </ligand>
</feature>
<keyword id="KW-0067">ATP-binding</keyword>
<keyword id="KW-0997">Cell inner membrane</keyword>
<keyword id="KW-1003">Cell membrane</keyword>
<keyword id="KW-0418">Kinase</keyword>
<keyword id="KW-0472">Membrane</keyword>
<keyword id="KW-0547">Nucleotide-binding</keyword>
<keyword id="KW-1185">Reference proteome</keyword>
<keyword id="KW-0808">Transferase</keyword>
<keyword id="KW-0812">Transmembrane</keyword>
<keyword id="KW-1133">Transmembrane helix</keyword>
<keyword id="KW-0831">Ubiquinone biosynthesis</keyword>
<proteinExistence type="inferred from homology"/>
<reference key="1">
    <citation type="journal article" date="2001" name="Proc. Natl. Acad. Sci. U.S.A.">
        <title>Complete genomic sequence of Pasteurella multocida Pm70.</title>
        <authorList>
            <person name="May B.J."/>
            <person name="Zhang Q."/>
            <person name="Li L.L."/>
            <person name="Paustian M.L."/>
            <person name="Whittam T.S."/>
            <person name="Kapur V."/>
        </authorList>
    </citation>
    <scope>NUCLEOTIDE SEQUENCE [LARGE SCALE GENOMIC DNA]</scope>
    <source>
        <strain>Pm70</strain>
    </source>
</reference>
<name>UBIB_PASMU</name>
<protein>
    <recommendedName>
        <fullName evidence="1">Probable protein kinase UbiB</fullName>
        <ecNumber evidence="1">2.7.-.-</ecNumber>
    </recommendedName>
    <alternativeName>
        <fullName evidence="1">Ubiquinone biosynthesis protein UbiB</fullName>
    </alternativeName>
</protein>